<feature type="chain" id="PRO_1000049806" description="Small ribosomal subunit protein uS12">
    <location>
        <begin position="1"/>
        <end position="129"/>
    </location>
</feature>
<feature type="region of interest" description="Disordered" evidence="3">
    <location>
        <begin position="110"/>
        <end position="129"/>
    </location>
</feature>
<feature type="modified residue" description="3-methylthioaspartic acid" evidence="1">
    <location>
        <position position="89"/>
    </location>
</feature>
<accession>A8GV15</accession>
<reference key="1">
    <citation type="submission" date="2007-09" db="EMBL/GenBank/DDBJ databases">
        <title>Complete genome sequencing of Rickettsia bellii.</title>
        <authorList>
            <person name="Madan A."/>
            <person name="Lee H."/>
            <person name="Madan A."/>
            <person name="Yoon J.-G."/>
            <person name="Ryu G.-Y."/>
            <person name="Dasch G."/>
            <person name="Ereemeva M."/>
        </authorList>
    </citation>
    <scope>NUCLEOTIDE SEQUENCE [LARGE SCALE GENOMIC DNA]</scope>
    <source>
        <strain>OSU 85-389</strain>
    </source>
</reference>
<sequence length="129" mass="14344">MPTYNQLVRFKRKSKVRKTKSPALEANPFKSGVCLVVKTVTPKKPNSALRKVATVRLSNKRTVNVYIPGEKHSVKEHDRVLVRGGQVPDLPGVKYHVVLGAYDIAGVKGRKQGRSRYGAPRKQVVATKK</sequence>
<evidence type="ECO:0000250" key="1"/>
<evidence type="ECO:0000255" key="2">
    <source>
        <dbReference type="HAMAP-Rule" id="MF_00403"/>
    </source>
</evidence>
<evidence type="ECO:0000256" key="3">
    <source>
        <dbReference type="SAM" id="MobiDB-lite"/>
    </source>
</evidence>
<evidence type="ECO:0000305" key="4"/>
<comment type="function">
    <text evidence="2">With S4 and S5 plays an important role in translational accuracy.</text>
</comment>
<comment type="function">
    <text evidence="2">Interacts with and stabilizes bases of the 16S rRNA that are involved in tRNA selection in the A site and with the mRNA backbone. Located at the interface of the 30S and 50S subunits, it traverses the body of the 30S subunit contacting proteins on the other side and probably holding the rRNA structure together. The combined cluster of proteins S8, S12 and S17 appears to hold together the shoulder and platform of the 30S subunit.</text>
</comment>
<comment type="subunit">
    <text evidence="2">Part of the 30S ribosomal subunit. Contacts proteins S8 and S17. May interact with IF1 in the 30S initiation complex.</text>
</comment>
<comment type="similarity">
    <text evidence="2">Belongs to the universal ribosomal protein uS12 family.</text>
</comment>
<gene>
    <name evidence="2" type="primary">rpsL</name>
    <name type="ordered locus">A1I_01470</name>
</gene>
<name>RS12_RICB8</name>
<keyword id="KW-0488">Methylation</keyword>
<keyword id="KW-0687">Ribonucleoprotein</keyword>
<keyword id="KW-0689">Ribosomal protein</keyword>
<keyword id="KW-0694">RNA-binding</keyword>
<keyword id="KW-0699">rRNA-binding</keyword>
<keyword id="KW-0820">tRNA-binding</keyword>
<dbReference type="EMBL" id="CP000849">
    <property type="protein sequence ID" value="ABV78686.1"/>
    <property type="molecule type" value="Genomic_DNA"/>
</dbReference>
<dbReference type="RefSeq" id="WP_012151620.1">
    <property type="nucleotide sequence ID" value="NC_009883.1"/>
</dbReference>
<dbReference type="SMR" id="A8GV15"/>
<dbReference type="KEGG" id="rbo:A1I_01470"/>
<dbReference type="HOGENOM" id="CLU_104295_1_3_5"/>
<dbReference type="GO" id="GO:0015935">
    <property type="term" value="C:small ribosomal subunit"/>
    <property type="evidence" value="ECO:0007669"/>
    <property type="project" value="InterPro"/>
</dbReference>
<dbReference type="GO" id="GO:0019843">
    <property type="term" value="F:rRNA binding"/>
    <property type="evidence" value="ECO:0007669"/>
    <property type="project" value="UniProtKB-UniRule"/>
</dbReference>
<dbReference type="GO" id="GO:0003735">
    <property type="term" value="F:structural constituent of ribosome"/>
    <property type="evidence" value="ECO:0007669"/>
    <property type="project" value="InterPro"/>
</dbReference>
<dbReference type="GO" id="GO:0000049">
    <property type="term" value="F:tRNA binding"/>
    <property type="evidence" value="ECO:0007669"/>
    <property type="project" value="UniProtKB-UniRule"/>
</dbReference>
<dbReference type="GO" id="GO:0006412">
    <property type="term" value="P:translation"/>
    <property type="evidence" value="ECO:0007669"/>
    <property type="project" value="UniProtKB-UniRule"/>
</dbReference>
<dbReference type="CDD" id="cd03368">
    <property type="entry name" value="Ribosomal_S12"/>
    <property type="match status" value="1"/>
</dbReference>
<dbReference type="FunFam" id="2.40.50.140:FF:000192">
    <property type="entry name" value="Mitochondrial ribosomal protein S12"/>
    <property type="match status" value="1"/>
</dbReference>
<dbReference type="Gene3D" id="2.40.50.140">
    <property type="entry name" value="Nucleic acid-binding proteins"/>
    <property type="match status" value="1"/>
</dbReference>
<dbReference type="HAMAP" id="MF_00403_B">
    <property type="entry name" value="Ribosomal_uS12_B"/>
    <property type="match status" value="1"/>
</dbReference>
<dbReference type="InterPro" id="IPR012340">
    <property type="entry name" value="NA-bd_OB-fold"/>
</dbReference>
<dbReference type="InterPro" id="IPR006032">
    <property type="entry name" value="Ribosomal_uS12"/>
</dbReference>
<dbReference type="InterPro" id="IPR005679">
    <property type="entry name" value="Ribosomal_uS12_bac"/>
</dbReference>
<dbReference type="NCBIfam" id="TIGR00981">
    <property type="entry name" value="rpsL_bact"/>
    <property type="match status" value="1"/>
</dbReference>
<dbReference type="PANTHER" id="PTHR11652">
    <property type="entry name" value="30S RIBOSOMAL PROTEIN S12 FAMILY MEMBER"/>
    <property type="match status" value="1"/>
</dbReference>
<dbReference type="Pfam" id="PF00164">
    <property type="entry name" value="Ribosom_S12_S23"/>
    <property type="match status" value="1"/>
</dbReference>
<dbReference type="PIRSF" id="PIRSF002133">
    <property type="entry name" value="Ribosomal_S12/S23"/>
    <property type="match status" value="1"/>
</dbReference>
<dbReference type="PRINTS" id="PR01034">
    <property type="entry name" value="RIBOSOMALS12"/>
</dbReference>
<dbReference type="SUPFAM" id="SSF50249">
    <property type="entry name" value="Nucleic acid-binding proteins"/>
    <property type="match status" value="1"/>
</dbReference>
<dbReference type="PROSITE" id="PS00055">
    <property type="entry name" value="RIBOSOMAL_S12"/>
    <property type="match status" value="1"/>
</dbReference>
<organism>
    <name type="scientific">Rickettsia bellii (strain OSU 85-389)</name>
    <dbReference type="NCBI Taxonomy" id="391896"/>
    <lineage>
        <taxon>Bacteria</taxon>
        <taxon>Pseudomonadati</taxon>
        <taxon>Pseudomonadota</taxon>
        <taxon>Alphaproteobacteria</taxon>
        <taxon>Rickettsiales</taxon>
        <taxon>Rickettsiaceae</taxon>
        <taxon>Rickettsieae</taxon>
        <taxon>Rickettsia</taxon>
        <taxon>belli group</taxon>
    </lineage>
</organism>
<proteinExistence type="inferred from homology"/>
<protein>
    <recommendedName>
        <fullName evidence="2">Small ribosomal subunit protein uS12</fullName>
    </recommendedName>
    <alternativeName>
        <fullName evidence="4">30S ribosomal protein S12</fullName>
    </alternativeName>
</protein>